<feature type="chain" id="PRO_0000372159" description="Na(+)/H(+) antiporter subunit F1">
    <location>
        <begin position="1"/>
        <end position="97"/>
    </location>
</feature>
<feature type="transmembrane region" description="Helical" evidence="2">
    <location>
        <begin position="3"/>
        <end position="23"/>
    </location>
</feature>
<feature type="transmembrane region" description="Helical" evidence="2">
    <location>
        <begin position="35"/>
        <end position="55"/>
    </location>
</feature>
<feature type="transmembrane region" description="Helical" evidence="2">
    <location>
        <begin position="60"/>
        <end position="80"/>
    </location>
</feature>
<comment type="function">
    <text evidence="1">Mnh complex is a Na(+)/H(+) antiporter involved in Na(+) excretion.</text>
</comment>
<comment type="subunit">
    <text evidence="1">May form a heterooligomeric complex that consists of seven subunits: mnhA1, mnhB1, mnhC1, mnhD1, mnhE1, mnhF1 and mnhG1.</text>
</comment>
<comment type="subcellular location">
    <subcellularLocation>
        <location evidence="3">Cell membrane</location>
        <topology evidence="3">Multi-pass membrane protein</topology>
    </subcellularLocation>
</comment>
<comment type="similarity">
    <text evidence="3">Belongs to the CPA3 antiporters (TC 2.A.63) subunit F family.</text>
</comment>
<name>MNHF1_STAES</name>
<gene>
    <name type="primary">mnhF1</name>
    <name type="ordered locus">SE_0641</name>
</gene>
<protein>
    <recommendedName>
        <fullName>Na(+)/H(+) antiporter subunit F1</fullName>
    </recommendedName>
    <alternativeName>
        <fullName>Mnh complex subunit F1</fullName>
    </alternativeName>
</protein>
<proteinExistence type="inferred from homology"/>
<evidence type="ECO:0000250" key="1"/>
<evidence type="ECO:0000255" key="2"/>
<evidence type="ECO:0000305" key="3"/>
<reference key="1">
    <citation type="journal article" date="2003" name="Mol. Microbiol.">
        <title>Genome-based analysis of virulence genes in a non-biofilm-forming Staphylococcus epidermidis strain (ATCC 12228).</title>
        <authorList>
            <person name="Zhang Y.-Q."/>
            <person name="Ren S.-X."/>
            <person name="Li H.-L."/>
            <person name="Wang Y.-X."/>
            <person name="Fu G."/>
            <person name="Yang J."/>
            <person name="Qin Z.-Q."/>
            <person name="Miao Y.-G."/>
            <person name="Wang W.-Y."/>
            <person name="Chen R.-S."/>
            <person name="Shen Y."/>
            <person name="Chen Z."/>
            <person name="Yuan Z.-H."/>
            <person name="Zhao G.-P."/>
            <person name="Qu D."/>
            <person name="Danchin A."/>
            <person name="Wen Y.-M."/>
        </authorList>
    </citation>
    <scope>NUCLEOTIDE SEQUENCE [LARGE SCALE GENOMIC DNA]</scope>
    <source>
        <strain>ATCC 12228 / FDA PCI 1200</strain>
    </source>
</reference>
<accession>Q8CPV3</accession>
<organism>
    <name type="scientific">Staphylococcus epidermidis (strain ATCC 12228 / FDA PCI 1200)</name>
    <dbReference type="NCBI Taxonomy" id="176280"/>
    <lineage>
        <taxon>Bacteria</taxon>
        <taxon>Bacillati</taxon>
        <taxon>Bacillota</taxon>
        <taxon>Bacilli</taxon>
        <taxon>Bacillales</taxon>
        <taxon>Staphylococcaceae</taxon>
        <taxon>Staphylococcus</taxon>
    </lineage>
</organism>
<keyword id="KW-0050">Antiport</keyword>
<keyword id="KW-1003">Cell membrane</keyword>
<keyword id="KW-0375">Hydrogen ion transport</keyword>
<keyword id="KW-0406">Ion transport</keyword>
<keyword id="KW-0472">Membrane</keyword>
<keyword id="KW-0915">Sodium</keyword>
<keyword id="KW-0739">Sodium transport</keyword>
<keyword id="KW-0812">Transmembrane</keyword>
<keyword id="KW-1133">Transmembrane helix</keyword>
<keyword id="KW-0813">Transport</keyword>
<dbReference type="EMBL" id="AE015929">
    <property type="protein sequence ID" value="AAO04238.1"/>
    <property type="molecule type" value="Genomic_DNA"/>
</dbReference>
<dbReference type="RefSeq" id="NP_764196.1">
    <property type="nucleotide sequence ID" value="NC_004461.1"/>
</dbReference>
<dbReference type="RefSeq" id="WP_001831940.1">
    <property type="nucleotide sequence ID" value="NZ_WBME01000044.1"/>
</dbReference>
<dbReference type="SMR" id="Q8CPV3"/>
<dbReference type="GeneID" id="50019212"/>
<dbReference type="KEGG" id="sep:SE_0641"/>
<dbReference type="PATRIC" id="fig|176280.10.peg.614"/>
<dbReference type="eggNOG" id="COG2212">
    <property type="taxonomic scope" value="Bacteria"/>
</dbReference>
<dbReference type="HOGENOM" id="CLU_125825_1_3_9"/>
<dbReference type="OrthoDB" id="9799958at2"/>
<dbReference type="Proteomes" id="UP000001411">
    <property type="component" value="Chromosome"/>
</dbReference>
<dbReference type="GO" id="GO:0005886">
    <property type="term" value="C:plasma membrane"/>
    <property type="evidence" value="ECO:0007669"/>
    <property type="project" value="UniProtKB-SubCell"/>
</dbReference>
<dbReference type="GO" id="GO:0015385">
    <property type="term" value="F:sodium:proton antiporter activity"/>
    <property type="evidence" value="ECO:0007669"/>
    <property type="project" value="TreeGrafter"/>
</dbReference>
<dbReference type="InterPro" id="IPR007208">
    <property type="entry name" value="MrpF/PhaF-like"/>
</dbReference>
<dbReference type="NCBIfam" id="NF009248">
    <property type="entry name" value="PRK12600.1"/>
    <property type="match status" value="1"/>
</dbReference>
<dbReference type="PANTHER" id="PTHR34702">
    <property type="entry name" value="NA(+)/H(+) ANTIPORTER SUBUNIT F1"/>
    <property type="match status" value="1"/>
</dbReference>
<dbReference type="PANTHER" id="PTHR34702:SF1">
    <property type="entry name" value="NA(+)_H(+) ANTIPORTER SUBUNIT F"/>
    <property type="match status" value="1"/>
</dbReference>
<dbReference type="Pfam" id="PF04066">
    <property type="entry name" value="MrpF_PhaF"/>
    <property type="match status" value="1"/>
</dbReference>
<dbReference type="PIRSF" id="PIRSF028784">
    <property type="entry name" value="MrpF"/>
    <property type="match status" value="1"/>
</dbReference>
<sequence length="97" mass="10669">MPFKIFIITALIIVVLSMLAMLIRVILGPSLADRVVALDAIGLQLMAVIALFSILLNIKYMLVVILMVGILAFLGTAVFSKFMDEGKVIKHDSNDRH</sequence>